<gene>
    <name evidence="7" type="primary">KDM4F</name>
</gene>
<keyword id="KW-0156">Chromatin regulator</keyword>
<keyword id="KW-0408">Iron</keyword>
<keyword id="KW-0479">Metal-binding</keyword>
<keyword id="KW-0539">Nucleus</keyword>
<keyword id="KW-0560">Oxidoreductase</keyword>
<keyword id="KW-1185">Reference proteome</keyword>
<keyword id="KW-0804">Transcription</keyword>
<keyword id="KW-0805">Transcription regulation</keyword>
<keyword id="KW-0862">Zinc</keyword>
<dbReference type="EC" id="1.14.11.66" evidence="1"/>
<dbReference type="EMBL" id="AP001264">
    <property type="status" value="NOT_ANNOTATED_CDS"/>
    <property type="molecule type" value="Genomic_DNA"/>
</dbReference>
<dbReference type="RefSeq" id="NP_001400684.1">
    <property type="nucleotide sequence ID" value="NM_001413755.1"/>
</dbReference>
<dbReference type="SMR" id="A0A1W2PPD8"/>
<dbReference type="FunCoup" id="A0A1W2PPD8">
    <property type="interactions" value="4"/>
</dbReference>
<dbReference type="STRING" id="9606.ENSP00000491279"/>
<dbReference type="GlyGen" id="A0A1W2PPD8">
    <property type="glycosylation" value="1 site"/>
</dbReference>
<dbReference type="BioMuta" id="KDM4F"/>
<dbReference type="MassIVE" id="A0A1W2PPD8"/>
<dbReference type="PeptideAtlas" id="A0A1W2PPD8"/>
<dbReference type="Ensembl" id="ENST00000545950.3">
    <property type="protein sequence ID" value="ENSP00000491279.1"/>
    <property type="gene ID" value="ENSG00000255855.4"/>
</dbReference>
<dbReference type="Ensembl" id="ENST00000711328.1">
    <property type="protein sequence ID" value="ENSP00000518692.1"/>
    <property type="gene ID" value="ENSG00000255855.4"/>
</dbReference>
<dbReference type="GeneID" id="100129053"/>
<dbReference type="MANE-Select" id="ENST00000711328.1">
    <property type="protein sequence ID" value="ENSP00000518692.1"/>
    <property type="RefSeq nucleotide sequence ID" value="NM_001413755.1"/>
    <property type="RefSeq protein sequence ID" value="NP_001400684.1"/>
</dbReference>
<dbReference type="AGR" id="HGNC:52413"/>
<dbReference type="GeneCards" id="KDM4F"/>
<dbReference type="HGNC" id="HGNC:52413">
    <property type="gene designation" value="KDM4F"/>
</dbReference>
<dbReference type="OpenTargets" id="ENSG00000255855"/>
<dbReference type="VEuPathDB" id="HostDB:ENSG00000255855"/>
<dbReference type="GeneTree" id="ENSGT00940000165078"/>
<dbReference type="InParanoid" id="A0A1W2PPD8"/>
<dbReference type="OMA" id="LCYNPKG"/>
<dbReference type="OrthoDB" id="9547406at2759"/>
<dbReference type="PAN-GO" id="A0A1W2PPD8">
    <property type="GO annotations" value="3 GO annotations based on evolutionary models"/>
</dbReference>
<dbReference type="SIGNOR" id="A0A1W2PPD8"/>
<dbReference type="PRO" id="PR:A0A1W2PPD8"/>
<dbReference type="Proteomes" id="UP000005640">
    <property type="component" value="Chromosome 11"/>
</dbReference>
<dbReference type="RNAct" id="A0A1W2PPD8">
    <property type="molecule type" value="protein"/>
</dbReference>
<dbReference type="GO" id="GO:0000785">
    <property type="term" value="C:chromatin"/>
    <property type="evidence" value="ECO:0000318"/>
    <property type="project" value="GO_Central"/>
</dbReference>
<dbReference type="GO" id="GO:0005634">
    <property type="term" value="C:nucleus"/>
    <property type="evidence" value="ECO:0000318"/>
    <property type="project" value="GO_Central"/>
</dbReference>
<dbReference type="GO" id="GO:0032454">
    <property type="term" value="F:histone H3K9 demethylase activity"/>
    <property type="evidence" value="ECO:0000318"/>
    <property type="project" value="GO_Central"/>
</dbReference>
<dbReference type="GO" id="GO:0046872">
    <property type="term" value="F:metal ion binding"/>
    <property type="evidence" value="ECO:0007669"/>
    <property type="project" value="UniProtKB-KW"/>
</dbReference>
<dbReference type="GO" id="GO:0016491">
    <property type="term" value="F:oxidoreductase activity"/>
    <property type="evidence" value="ECO:0007669"/>
    <property type="project" value="UniProtKB-KW"/>
</dbReference>
<dbReference type="GO" id="GO:0006338">
    <property type="term" value="P:chromatin remodeling"/>
    <property type="evidence" value="ECO:0000318"/>
    <property type="project" value="GO_Central"/>
</dbReference>
<dbReference type="GO" id="GO:0010468">
    <property type="term" value="P:regulation of gene expression"/>
    <property type="evidence" value="ECO:0000318"/>
    <property type="project" value="GO_Central"/>
</dbReference>
<dbReference type="FunFam" id="2.60.120.650:FF:000003">
    <property type="entry name" value="Lysine-specific demethylase 4D"/>
    <property type="match status" value="1"/>
</dbReference>
<dbReference type="Gene3D" id="2.60.120.650">
    <property type="entry name" value="Cupin"/>
    <property type="match status" value="1"/>
</dbReference>
<dbReference type="InterPro" id="IPR003347">
    <property type="entry name" value="JmjC_dom"/>
</dbReference>
<dbReference type="InterPro" id="IPR003349">
    <property type="entry name" value="JmjN"/>
</dbReference>
<dbReference type="PANTHER" id="PTHR10694">
    <property type="entry name" value="LYSINE-SPECIFIC DEMETHYLASE"/>
    <property type="match status" value="1"/>
</dbReference>
<dbReference type="PANTHER" id="PTHR10694:SF90">
    <property type="entry name" value="LYSINE-SPECIFIC DEMETHYLASE 4F-RELATED"/>
    <property type="match status" value="1"/>
</dbReference>
<dbReference type="Pfam" id="PF02373">
    <property type="entry name" value="JmjC"/>
    <property type="match status" value="1"/>
</dbReference>
<dbReference type="Pfam" id="PF02375">
    <property type="entry name" value="JmjN"/>
    <property type="match status" value="1"/>
</dbReference>
<dbReference type="SMART" id="SM00558">
    <property type="entry name" value="JmjC"/>
    <property type="match status" value="1"/>
</dbReference>
<dbReference type="SMART" id="SM00545">
    <property type="entry name" value="JmjN"/>
    <property type="match status" value="1"/>
</dbReference>
<dbReference type="SUPFAM" id="SSF51197">
    <property type="entry name" value="Clavaminate synthase-like"/>
    <property type="match status" value="1"/>
</dbReference>
<dbReference type="PROSITE" id="PS51184">
    <property type="entry name" value="JMJC"/>
    <property type="match status" value="1"/>
</dbReference>
<dbReference type="PROSITE" id="PS51183">
    <property type="entry name" value="JMJN"/>
    <property type="match status" value="1"/>
</dbReference>
<accession>A0A1W2PPD8</accession>
<protein>
    <recommendedName>
        <fullName evidence="6">Probable lysine-specific demethylase 4F</fullName>
        <ecNumber evidence="1">1.14.11.66</ecNumber>
    </recommendedName>
</protein>
<organism>
    <name type="scientific">Homo sapiens</name>
    <name type="common">Human</name>
    <dbReference type="NCBI Taxonomy" id="9606"/>
    <lineage>
        <taxon>Eukaryota</taxon>
        <taxon>Metazoa</taxon>
        <taxon>Chordata</taxon>
        <taxon>Craniata</taxon>
        <taxon>Vertebrata</taxon>
        <taxon>Euteleostomi</taxon>
        <taxon>Mammalia</taxon>
        <taxon>Eutheria</taxon>
        <taxon>Euarchontoglires</taxon>
        <taxon>Primates</taxon>
        <taxon>Haplorrhini</taxon>
        <taxon>Catarrhini</taxon>
        <taxon>Hominidae</taxon>
        <taxon>Homo</taxon>
    </lineage>
</organism>
<reference key="1">
    <citation type="journal article" date="2006" name="Nature">
        <title>Human chromosome 11 DNA sequence and analysis including novel gene identification.</title>
        <authorList>
            <person name="Taylor T.D."/>
            <person name="Noguchi H."/>
            <person name="Totoki Y."/>
            <person name="Toyoda A."/>
            <person name="Kuroki Y."/>
            <person name="Dewar K."/>
            <person name="Lloyd C."/>
            <person name="Itoh T."/>
            <person name="Takeda T."/>
            <person name="Kim D.-W."/>
            <person name="She X."/>
            <person name="Barlow K.F."/>
            <person name="Bloom T."/>
            <person name="Bruford E."/>
            <person name="Chang J.L."/>
            <person name="Cuomo C.A."/>
            <person name="Eichler E."/>
            <person name="FitzGerald M.G."/>
            <person name="Jaffe D.B."/>
            <person name="LaButti K."/>
            <person name="Nicol R."/>
            <person name="Park H.-S."/>
            <person name="Seaman C."/>
            <person name="Sougnez C."/>
            <person name="Yang X."/>
            <person name="Zimmer A.R."/>
            <person name="Zody M.C."/>
            <person name="Birren B.W."/>
            <person name="Nusbaum C."/>
            <person name="Fujiyama A."/>
            <person name="Hattori M."/>
            <person name="Rogers J."/>
            <person name="Lander E.S."/>
            <person name="Sakaki Y."/>
        </authorList>
    </citation>
    <scope>NUCLEOTIDE SEQUENCE [LARGE SCALE GENOMIC DNA]</scope>
</reference>
<proteinExistence type="inferred from homology"/>
<name>KDM4F_HUMAN</name>
<feature type="chain" id="PRO_0000457670" description="Probable lysine-specific demethylase 4F">
    <location>
        <begin position="1"/>
        <end position="638"/>
    </location>
</feature>
<feature type="domain" description="JmjN" evidence="3">
    <location>
        <begin position="15"/>
        <end position="57"/>
    </location>
</feature>
<feature type="domain" description="JmjC" evidence="4">
    <location>
        <begin position="143"/>
        <end position="309"/>
    </location>
</feature>
<feature type="region of interest" description="Disordered" evidence="5">
    <location>
        <begin position="426"/>
        <end position="474"/>
    </location>
</feature>
<feature type="compositionally biased region" description="Basic residues" evidence="5">
    <location>
        <begin position="431"/>
        <end position="443"/>
    </location>
</feature>
<feature type="binding site" evidence="1">
    <location>
        <position position="133"/>
    </location>
    <ligand>
        <name>2-oxoglutarate</name>
        <dbReference type="ChEBI" id="CHEBI:16810"/>
    </ligand>
</feature>
<feature type="binding site" evidence="4">
    <location>
        <position position="189"/>
    </location>
    <ligand>
        <name>Fe cation</name>
        <dbReference type="ChEBI" id="CHEBI:24875"/>
        <note>catalytic</note>
    </ligand>
</feature>
<feature type="binding site" evidence="4">
    <location>
        <position position="191"/>
    </location>
    <ligand>
        <name>Fe cation</name>
        <dbReference type="ChEBI" id="CHEBI:24875"/>
        <note>catalytic</note>
    </ligand>
</feature>
<feature type="binding site" evidence="1">
    <location>
        <position position="199"/>
    </location>
    <ligand>
        <name>2-oxoglutarate</name>
        <dbReference type="ChEBI" id="CHEBI:16810"/>
    </ligand>
</feature>
<feature type="binding site" evidence="1">
    <location>
        <position position="207"/>
    </location>
    <ligand>
        <name>2-oxoglutarate</name>
        <dbReference type="ChEBI" id="CHEBI:16810"/>
    </ligand>
</feature>
<feature type="binding site" evidence="2">
    <location>
        <position position="235"/>
    </location>
    <ligand>
        <name>Zn(2+)</name>
        <dbReference type="ChEBI" id="CHEBI:29105"/>
    </ligand>
</feature>
<feature type="binding site" evidence="2">
    <location>
        <position position="241"/>
    </location>
    <ligand>
        <name>Zn(2+)</name>
        <dbReference type="ChEBI" id="CHEBI:29105"/>
    </ligand>
</feature>
<feature type="binding site" evidence="1">
    <location>
        <position position="242"/>
    </location>
    <ligand>
        <name>2-oxoglutarate</name>
        <dbReference type="ChEBI" id="CHEBI:16810"/>
    </ligand>
</feature>
<feature type="binding site" evidence="4">
    <location>
        <position position="277"/>
    </location>
    <ligand>
        <name>Fe cation</name>
        <dbReference type="ChEBI" id="CHEBI:24875"/>
        <note>catalytic</note>
    </ligand>
</feature>
<feature type="binding site" evidence="2">
    <location>
        <position position="307"/>
    </location>
    <ligand>
        <name>Zn(2+)</name>
        <dbReference type="ChEBI" id="CHEBI:29105"/>
    </ligand>
</feature>
<feature type="binding site" evidence="2">
    <location>
        <position position="309"/>
    </location>
    <ligand>
        <name>Zn(2+)</name>
        <dbReference type="ChEBI" id="CHEBI:29105"/>
    </ligand>
</feature>
<comment type="function">
    <text evidence="1">Probable histone demethylase that specifically demethylates 'Lys-9' of histone H3, thereby playing a central role in histone code.</text>
</comment>
<comment type="catalytic activity">
    <reaction evidence="1">
        <text>N(6),N(6),N(6)-trimethyl-L-lysyl(9)-[histone H3] + 2 2-oxoglutarate + 2 O2 = N(6)-methyl-L-lysyl(9)-[histone H3] + 2 formaldehyde + 2 succinate + 2 CO2</text>
        <dbReference type="Rhea" id="RHEA:60200"/>
        <dbReference type="Rhea" id="RHEA-COMP:15538"/>
        <dbReference type="Rhea" id="RHEA-COMP:15542"/>
        <dbReference type="ChEBI" id="CHEBI:15379"/>
        <dbReference type="ChEBI" id="CHEBI:16526"/>
        <dbReference type="ChEBI" id="CHEBI:16810"/>
        <dbReference type="ChEBI" id="CHEBI:16842"/>
        <dbReference type="ChEBI" id="CHEBI:30031"/>
        <dbReference type="ChEBI" id="CHEBI:61929"/>
        <dbReference type="ChEBI" id="CHEBI:61961"/>
        <dbReference type="EC" id="1.14.11.66"/>
    </reaction>
</comment>
<comment type="cofactor">
    <cofactor evidence="1">
        <name>Fe(2+)</name>
        <dbReference type="ChEBI" id="CHEBI:29033"/>
    </cofactor>
    <text evidence="1">Binds 1 Fe(2+) ion per subunit.</text>
</comment>
<comment type="subcellular location">
    <subcellularLocation>
        <location evidence="3">Nucleus</location>
    </subcellularLocation>
</comment>
<comment type="similarity">
    <text evidence="6">Belongs to the JHDM3 histone demethylase family.</text>
</comment>
<evidence type="ECO:0000250" key="1">
    <source>
        <dbReference type="UniProtKB" id="B2RXH2"/>
    </source>
</evidence>
<evidence type="ECO:0000250" key="2">
    <source>
        <dbReference type="UniProtKB" id="Q6B0I6"/>
    </source>
</evidence>
<evidence type="ECO:0000255" key="3">
    <source>
        <dbReference type="PROSITE-ProRule" id="PRU00537"/>
    </source>
</evidence>
<evidence type="ECO:0000255" key="4">
    <source>
        <dbReference type="PROSITE-ProRule" id="PRU00538"/>
    </source>
</evidence>
<evidence type="ECO:0000256" key="5">
    <source>
        <dbReference type="SAM" id="MobiDB-lite"/>
    </source>
</evidence>
<evidence type="ECO:0000305" key="6"/>
<evidence type="ECO:0000312" key="7">
    <source>
        <dbReference type="HGNC" id="HGNC:52413"/>
    </source>
</evidence>
<sequence length="638" mass="70966">MKSVHSSPQNTSHTIMTFYPTMEEFADFNTYVAYMESQGAHRAGLAKVIPPKEWKARQMYDDIEDILIATPLQQVTSGQGGVFTQYHKKKKAMRVGQYRHLANSKKYQTPPHQNFADLEQRYWKSHPGNPPIYGADISGSLFEESTKQWNLGHLGTILDLLEQECGVVIEGVNTPYLYFGMWKTTFAWHTEDMDLYSINYLHFGEPKTWYVVPPEHGQRLECLARELFPGNSRGCEGFLRHKVALISPTVLKKNGIPFNRMTQEAGEFMVTFPYGYHAGFNHGFNCAEAINFATPRWIDYGKVASQCSCGEARVTFSMDAFVRILQPESYELWKHRQDLTVVDYMEPRVAESQEPSNWREDIALRRAALGLRHLRNHITSCPTRTVAPRLCYNPKGGGTDAVPGSAIQALETSAWVLPPSTGRWGPCRGCGRGRGRGRGRGRRPRELGTEETTVQSAAKRRLSVGTGSRAPGRKPQLQFADEALTDKPAPLSGGLPHFAKASGCCCAPDLQPLGPPLDPDEPMHPGPCLLSLDSTASSLPLVVPMTPPSVTVPLITLSRDTGGDWKSPVNLAKVVAMDHSYASRVPVPTKFSRISWAPDSSAGAKARQRYATEFGDIFLQCMINPLDPWPLNMVSNVK</sequence>